<organism>
    <name type="scientific">Orientia tsutsugamushi (strain Ikeda)</name>
    <name type="common">Rickettsia tsutsugamushi</name>
    <dbReference type="NCBI Taxonomy" id="334380"/>
    <lineage>
        <taxon>Bacteria</taxon>
        <taxon>Pseudomonadati</taxon>
        <taxon>Pseudomonadota</taxon>
        <taxon>Alphaproteobacteria</taxon>
        <taxon>Rickettsiales</taxon>
        <taxon>Rickettsiaceae</taxon>
        <taxon>Rickettsieae</taxon>
        <taxon>Orientia</taxon>
    </lineage>
</organism>
<feature type="chain" id="PRO_1000089511" description="Ribosome maturation factor RimM">
    <location>
        <begin position="1"/>
        <end position="164"/>
    </location>
</feature>
<feature type="domain" description="PRC barrel" evidence="1">
    <location>
        <begin position="92"/>
        <end position="164"/>
    </location>
</feature>
<accession>B3CTT8</accession>
<reference key="1">
    <citation type="journal article" date="2008" name="DNA Res.">
        <title>The whole-genome sequencing of the obligate intracellular bacterium Orientia tsutsugamushi revealed massive gene amplification during reductive genome evolution.</title>
        <authorList>
            <person name="Nakayama K."/>
            <person name="Yamashita A."/>
            <person name="Kurokawa K."/>
            <person name="Morimoto T."/>
            <person name="Ogawa M."/>
            <person name="Fukuhara M."/>
            <person name="Urakami H."/>
            <person name="Ohnishi M."/>
            <person name="Uchiyama I."/>
            <person name="Ogura Y."/>
            <person name="Ooka T."/>
            <person name="Oshima K."/>
            <person name="Tamura A."/>
            <person name="Hattori M."/>
            <person name="Hayashi T."/>
        </authorList>
    </citation>
    <scope>NUCLEOTIDE SEQUENCE [LARGE SCALE GENOMIC DNA]</scope>
    <source>
        <strain>Ikeda</strain>
    </source>
</reference>
<sequence>MSSESKLILIGIISSPYGIRGQVAIKSFTDPASNILNYELKDYRKNIIKIHSAKILSKKIICNIDQIVTRTAAEQLTRTKLYIYKHELPQLPDSEYYVANLNGIKVKNLEGEIIGKINNICNYNAGDIIEVVYNDGKKIMYPFTNEIFPQITEDFVVIVPPEFI</sequence>
<dbReference type="EMBL" id="AP008981">
    <property type="protein sequence ID" value="BAG40785.1"/>
    <property type="molecule type" value="Genomic_DNA"/>
</dbReference>
<dbReference type="RefSeq" id="WP_012461833.1">
    <property type="nucleotide sequence ID" value="NC_010793.1"/>
</dbReference>
<dbReference type="SMR" id="B3CTT8"/>
<dbReference type="KEGG" id="ott:OTT_1327"/>
<dbReference type="HOGENOM" id="CLU_077636_3_0_5"/>
<dbReference type="OrthoDB" id="9788191at2"/>
<dbReference type="Proteomes" id="UP000001033">
    <property type="component" value="Chromosome"/>
</dbReference>
<dbReference type="GO" id="GO:0005737">
    <property type="term" value="C:cytoplasm"/>
    <property type="evidence" value="ECO:0007669"/>
    <property type="project" value="UniProtKB-SubCell"/>
</dbReference>
<dbReference type="GO" id="GO:0005840">
    <property type="term" value="C:ribosome"/>
    <property type="evidence" value="ECO:0007669"/>
    <property type="project" value="InterPro"/>
</dbReference>
<dbReference type="GO" id="GO:0043022">
    <property type="term" value="F:ribosome binding"/>
    <property type="evidence" value="ECO:0007669"/>
    <property type="project" value="InterPro"/>
</dbReference>
<dbReference type="GO" id="GO:0042274">
    <property type="term" value="P:ribosomal small subunit biogenesis"/>
    <property type="evidence" value="ECO:0007669"/>
    <property type="project" value="UniProtKB-UniRule"/>
</dbReference>
<dbReference type="GO" id="GO:0006364">
    <property type="term" value="P:rRNA processing"/>
    <property type="evidence" value="ECO:0007669"/>
    <property type="project" value="UniProtKB-UniRule"/>
</dbReference>
<dbReference type="Gene3D" id="2.30.30.240">
    <property type="entry name" value="PRC-barrel domain"/>
    <property type="match status" value="1"/>
</dbReference>
<dbReference type="Gene3D" id="2.40.30.60">
    <property type="entry name" value="RimM"/>
    <property type="match status" value="1"/>
</dbReference>
<dbReference type="HAMAP" id="MF_00014">
    <property type="entry name" value="Ribosome_mat_RimM"/>
    <property type="match status" value="1"/>
</dbReference>
<dbReference type="InterPro" id="IPR027275">
    <property type="entry name" value="PRC-brl_dom"/>
</dbReference>
<dbReference type="InterPro" id="IPR011033">
    <property type="entry name" value="PRC_barrel-like_sf"/>
</dbReference>
<dbReference type="InterPro" id="IPR011961">
    <property type="entry name" value="RimM"/>
</dbReference>
<dbReference type="InterPro" id="IPR002676">
    <property type="entry name" value="RimM_N"/>
</dbReference>
<dbReference type="InterPro" id="IPR036976">
    <property type="entry name" value="RimM_N_sf"/>
</dbReference>
<dbReference type="InterPro" id="IPR009000">
    <property type="entry name" value="Transl_B-barrel_sf"/>
</dbReference>
<dbReference type="NCBIfam" id="TIGR02273">
    <property type="entry name" value="16S_RimM"/>
    <property type="match status" value="1"/>
</dbReference>
<dbReference type="PANTHER" id="PTHR33692">
    <property type="entry name" value="RIBOSOME MATURATION FACTOR RIMM"/>
    <property type="match status" value="1"/>
</dbReference>
<dbReference type="PANTHER" id="PTHR33692:SF1">
    <property type="entry name" value="RIBOSOME MATURATION FACTOR RIMM"/>
    <property type="match status" value="1"/>
</dbReference>
<dbReference type="Pfam" id="PF05239">
    <property type="entry name" value="PRC"/>
    <property type="match status" value="1"/>
</dbReference>
<dbReference type="Pfam" id="PF01782">
    <property type="entry name" value="RimM"/>
    <property type="match status" value="1"/>
</dbReference>
<dbReference type="SUPFAM" id="SSF50346">
    <property type="entry name" value="PRC-barrel domain"/>
    <property type="match status" value="1"/>
</dbReference>
<dbReference type="SUPFAM" id="SSF50447">
    <property type="entry name" value="Translation proteins"/>
    <property type="match status" value="1"/>
</dbReference>
<protein>
    <recommendedName>
        <fullName evidence="1">Ribosome maturation factor RimM</fullName>
    </recommendedName>
</protein>
<gene>
    <name evidence="1" type="primary">rimM</name>
    <name type="ordered locus">OTT_1327</name>
</gene>
<evidence type="ECO:0000255" key="1">
    <source>
        <dbReference type="HAMAP-Rule" id="MF_00014"/>
    </source>
</evidence>
<keyword id="KW-0143">Chaperone</keyword>
<keyword id="KW-0963">Cytoplasm</keyword>
<keyword id="KW-0690">Ribosome biogenesis</keyword>
<keyword id="KW-0698">rRNA processing</keyword>
<name>RIMM_ORITI</name>
<proteinExistence type="inferred from homology"/>
<comment type="function">
    <text evidence="1">An accessory protein needed during the final step in the assembly of 30S ribosomal subunit, possibly for assembly of the head region. Essential for efficient processing of 16S rRNA. May be needed both before and after RbfA during the maturation of 16S rRNA. It has affinity for free ribosomal 30S subunits but not for 70S ribosomes.</text>
</comment>
<comment type="subunit">
    <text evidence="1">Binds ribosomal protein uS19.</text>
</comment>
<comment type="subcellular location">
    <subcellularLocation>
        <location evidence="1">Cytoplasm</location>
    </subcellularLocation>
</comment>
<comment type="domain">
    <text evidence="1">The PRC barrel domain binds ribosomal protein uS19.</text>
</comment>
<comment type="similarity">
    <text evidence="1">Belongs to the RimM family.</text>
</comment>